<accession>O86062</accession>
<accession>Q9I2S2</accession>
<comment type="function">
    <text evidence="1">mRNA decapping enzyme that specifically removes the nicotinamide adenine dinucleotide (NAD) cap from a subset of mRNAs by hydrolyzing the diphosphate linkage to produce nicotinamide mononucleotide (NMN) and 5' monophosphate mRNA. The NAD-cap is present at the 5'-end of some mRNAs and stabilizes RNA against 5'-processing. Has preference for mRNAs with a 5'-end purine. Catalyzes the hydrolysis of a broad range of dinucleotide pyrophosphates.</text>
</comment>
<comment type="catalytic activity">
    <reaction evidence="1">
        <text>a 5'-end NAD(+)-phospho-ribonucleoside in mRNA + H2O = a 5'-end phospho-adenosine-phospho-ribonucleoside in mRNA + beta-nicotinamide D-ribonucleotide + 2 H(+)</text>
        <dbReference type="Rhea" id="RHEA:60876"/>
        <dbReference type="Rhea" id="RHEA-COMP:15698"/>
        <dbReference type="Rhea" id="RHEA-COMP:15719"/>
        <dbReference type="ChEBI" id="CHEBI:14649"/>
        <dbReference type="ChEBI" id="CHEBI:15377"/>
        <dbReference type="ChEBI" id="CHEBI:15378"/>
        <dbReference type="ChEBI" id="CHEBI:144029"/>
        <dbReference type="ChEBI" id="CHEBI:144051"/>
    </reaction>
    <physiologicalReaction direction="left-to-right" evidence="1">
        <dbReference type="Rhea" id="RHEA:60877"/>
    </physiologicalReaction>
</comment>
<comment type="catalytic activity">
    <reaction evidence="1">
        <text>NAD(+) + H2O = beta-nicotinamide D-ribonucleotide + AMP + 2 H(+)</text>
        <dbReference type="Rhea" id="RHEA:11800"/>
        <dbReference type="ChEBI" id="CHEBI:14649"/>
        <dbReference type="ChEBI" id="CHEBI:15377"/>
        <dbReference type="ChEBI" id="CHEBI:15378"/>
        <dbReference type="ChEBI" id="CHEBI:57540"/>
        <dbReference type="ChEBI" id="CHEBI:456215"/>
        <dbReference type="EC" id="3.6.1.22"/>
    </reaction>
</comment>
<comment type="catalytic activity">
    <reaction evidence="1">
        <text>NADH + H2O = reduced beta-nicotinamide D-ribonucleotide + AMP + 2 H(+)</text>
        <dbReference type="Rhea" id="RHEA:48868"/>
        <dbReference type="ChEBI" id="CHEBI:15377"/>
        <dbReference type="ChEBI" id="CHEBI:15378"/>
        <dbReference type="ChEBI" id="CHEBI:57945"/>
        <dbReference type="ChEBI" id="CHEBI:90832"/>
        <dbReference type="ChEBI" id="CHEBI:456215"/>
        <dbReference type="EC" id="3.6.1.22"/>
    </reaction>
</comment>
<comment type="cofactor">
    <cofactor evidence="1">
        <name>Mg(2+)</name>
        <dbReference type="ChEBI" id="CHEBI:18420"/>
    </cofactor>
    <cofactor evidence="1">
        <name>Mn(2+)</name>
        <dbReference type="ChEBI" id="CHEBI:29035"/>
    </cofactor>
    <text evidence="1">Divalent metal cations. Mg(2+) or Mn(2+).</text>
</comment>
<comment type="cofactor">
    <cofactor evidence="1">
        <name>Zn(2+)</name>
        <dbReference type="ChEBI" id="CHEBI:29105"/>
    </cofactor>
    <text evidence="1">Binds 1 zinc ion per subunit.</text>
</comment>
<comment type="subunit">
    <text evidence="1">Homodimer.</text>
</comment>
<comment type="similarity">
    <text evidence="1 2">Belongs to the Nudix hydrolase family. NudC subfamily.</text>
</comment>
<feature type="chain" id="PRO_0000056973" description="NAD-capped RNA hydrolase NudC">
    <location>
        <begin position="1"/>
        <end position="278"/>
    </location>
</feature>
<feature type="domain" description="Nudix hydrolase" evidence="1">
    <location>
        <begin position="141"/>
        <end position="265"/>
    </location>
</feature>
<feature type="short sequence motif" description="Nudix box" evidence="1">
    <location>
        <begin position="175"/>
        <end position="196"/>
    </location>
</feature>
<feature type="binding site" evidence="1">
    <location>
        <position position="84"/>
    </location>
    <ligand>
        <name>substrate</name>
    </ligand>
</feature>
<feature type="binding site" evidence="1">
    <location>
        <position position="114"/>
    </location>
    <ligand>
        <name>Zn(2+)</name>
        <dbReference type="ChEBI" id="CHEBI:29105"/>
    </ligand>
</feature>
<feature type="binding site" evidence="1">
    <location>
        <position position="117"/>
    </location>
    <ligand>
        <name>Zn(2+)</name>
        <dbReference type="ChEBI" id="CHEBI:29105"/>
    </ligand>
</feature>
<feature type="binding site" evidence="1">
    <location>
        <position position="127"/>
    </location>
    <ligand>
        <name>substrate</name>
    </ligand>
</feature>
<feature type="binding site" evidence="1">
    <location>
        <position position="132"/>
    </location>
    <ligand>
        <name>Zn(2+)</name>
        <dbReference type="ChEBI" id="CHEBI:29105"/>
    </ligand>
</feature>
<feature type="binding site" evidence="1">
    <location>
        <position position="135"/>
    </location>
    <ligand>
        <name>Zn(2+)</name>
        <dbReference type="ChEBI" id="CHEBI:29105"/>
    </ligand>
</feature>
<feature type="binding site" evidence="1">
    <location>
        <position position="140"/>
    </location>
    <ligand>
        <name>substrate</name>
    </ligand>
</feature>
<feature type="binding site" evidence="1">
    <location>
        <position position="174"/>
    </location>
    <ligand>
        <name>a divalent metal cation</name>
        <dbReference type="ChEBI" id="CHEBI:60240"/>
        <label>1</label>
    </ligand>
</feature>
<feature type="binding site" evidence="1">
    <location>
        <position position="190"/>
    </location>
    <ligand>
        <name>a divalent metal cation</name>
        <dbReference type="ChEBI" id="CHEBI:60240"/>
        <label>2</label>
    </ligand>
</feature>
<feature type="binding site" evidence="1">
    <location>
        <position position="190"/>
    </location>
    <ligand>
        <name>a divalent metal cation</name>
        <dbReference type="ChEBI" id="CHEBI:60240"/>
        <label>3</label>
    </ligand>
</feature>
<feature type="binding site" evidence="1">
    <location>
        <position position="194"/>
    </location>
    <ligand>
        <name>a divalent metal cation</name>
        <dbReference type="ChEBI" id="CHEBI:60240"/>
        <label>1</label>
    </ligand>
</feature>
<feature type="binding site" evidence="1">
    <location>
        <position position="194"/>
    </location>
    <ligand>
        <name>a divalent metal cation</name>
        <dbReference type="ChEBI" id="CHEBI:60240"/>
        <label>3</label>
    </ligand>
</feature>
<feature type="binding site" evidence="1">
    <location>
        <begin position="208"/>
        <end position="215"/>
    </location>
    <ligand>
        <name>substrate</name>
    </ligand>
</feature>
<feature type="binding site" evidence="1">
    <location>
        <position position="235"/>
    </location>
    <ligand>
        <name>a divalent metal cation</name>
        <dbReference type="ChEBI" id="CHEBI:60240"/>
        <label>1</label>
    </ligand>
</feature>
<feature type="binding site" evidence="1">
    <location>
        <position position="235"/>
    </location>
    <ligand>
        <name>a divalent metal cation</name>
        <dbReference type="ChEBI" id="CHEBI:60240"/>
        <label>3</label>
    </ligand>
</feature>
<feature type="binding site" evidence="1">
    <location>
        <position position="257"/>
    </location>
    <ligand>
        <name>substrate</name>
    </ligand>
</feature>
<feature type="sequence conflict" description="In Ref. 1; AAC34568." evidence="2" ref="1">
    <original>A</original>
    <variation>V</variation>
    <location>
        <position position="2"/>
    </location>
</feature>
<feature type="sequence conflict" description="In Ref. 1; AAC34568." evidence="2" ref="1">
    <original>F</original>
    <variation>S</variation>
    <location>
        <position position="5"/>
    </location>
</feature>
<feature type="sequence conflict" description="In Ref. 1; AAC34568." evidence="2" ref="1">
    <original>A</original>
    <variation>V</variation>
    <location>
        <position position="9"/>
    </location>
</feature>
<feature type="sequence conflict" description="In Ref. 1; AAC34568." evidence="2" ref="1">
    <original>E</original>
    <variation>D</variation>
    <location>
        <position position="74"/>
    </location>
</feature>
<reference key="1">
    <citation type="submission" date="1998-08" db="EMBL/GenBank/DDBJ databases">
        <title>fimL, a new gene involved in pilin biogenesis and function in Pseudomonas aeruginosa.</title>
        <authorList>
            <person name="Comolli J."/>
            <person name="Kang P.J."/>
            <person name="Engel J.N."/>
        </authorList>
    </citation>
    <scope>NUCLEOTIDE SEQUENCE [GENOMIC DNA]</scope>
    <source>
        <strain>ATCC 29260 / PA103</strain>
    </source>
</reference>
<reference key="2">
    <citation type="journal article" date="2000" name="Nature">
        <title>Complete genome sequence of Pseudomonas aeruginosa PAO1, an opportunistic pathogen.</title>
        <authorList>
            <person name="Stover C.K."/>
            <person name="Pham X.-Q.T."/>
            <person name="Erwin A.L."/>
            <person name="Mizoguchi S.D."/>
            <person name="Warrener P."/>
            <person name="Hickey M.J."/>
            <person name="Brinkman F.S.L."/>
            <person name="Hufnagle W.O."/>
            <person name="Kowalik D.J."/>
            <person name="Lagrou M."/>
            <person name="Garber R.L."/>
            <person name="Goltry L."/>
            <person name="Tolentino E."/>
            <person name="Westbrock-Wadman S."/>
            <person name="Yuan Y."/>
            <person name="Brody L.L."/>
            <person name="Coulter S.N."/>
            <person name="Folger K.R."/>
            <person name="Kas A."/>
            <person name="Larbig K."/>
            <person name="Lim R.M."/>
            <person name="Smith K.A."/>
            <person name="Spencer D.H."/>
            <person name="Wong G.K.-S."/>
            <person name="Wu Z."/>
            <person name="Paulsen I.T."/>
            <person name="Reizer J."/>
            <person name="Saier M.H. Jr."/>
            <person name="Hancock R.E.W."/>
            <person name="Lory S."/>
            <person name="Olson M.V."/>
        </authorList>
    </citation>
    <scope>NUCLEOTIDE SEQUENCE [LARGE SCALE GENOMIC DNA]</scope>
    <source>
        <strain>ATCC 15692 / DSM 22644 / CIP 104116 / JCM 14847 / LMG 12228 / 1C / PRS 101 / PAO1</strain>
    </source>
</reference>
<dbReference type="EC" id="3.6.1.-" evidence="1"/>
<dbReference type="EC" id="3.6.1.22" evidence="1"/>
<dbReference type="EMBL" id="AF083252">
    <property type="protein sequence ID" value="AAC34568.1"/>
    <property type="molecule type" value="Genomic_DNA"/>
</dbReference>
<dbReference type="EMBL" id="AE004091">
    <property type="protein sequence ID" value="AAG05212.1"/>
    <property type="molecule type" value="Genomic_DNA"/>
</dbReference>
<dbReference type="PIR" id="A83419">
    <property type="entry name" value="A83419"/>
</dbReference>
<dbReference type="RefSeq" id="NP_250514.1">
    <property type="nucleotide sequence ID" value="NC_002516.2"/>
</dbReference>
<dbReference type="RefSeq" id="WP_003113595.1">
    <property type="nucleotide sequence ID" value="NZ_QZGE01000003.1"/>
</dbReference>
<dbReference type="SMR" id="O86062"/>
<dbReference type="FunCoup" id="O86062">
    <property type="interactions" value="342"/>
</dbReference>
<dbReference type="STRING" id="208964.PA1823"/>
<dbReference type="PaxDb" id="208964-PA1823"/>
<dbReference type="DNASU" id="880282"/>
<dbReference type="GeneID" id="880282"/>
<dbReference type="KEGG" id="pae:PA1823"/>
<dbReference type="PATRIC" id="fig|208964.12.peg.1893"/>
<dbReference type="PseudoCAP" id="PA1823"/>
<dbReference type="HOGENOM" id="CLU_037162_0_1_6"/>
<dbReference type="InParanoid" id="O86062"/>
<dbReference type="OrthoDB" id="9791656at2"/>
<dbReference type="PhylomeDB" id="O86062"/>
<dbReference type="BioCyc" id="PAER208964:G1FZ6-1861-MONOMER"/>
<dbReference type="Proteomes" id="UP000002438">
    <property type="component" value="Chromosome"/>
</dbReference>
<dbReference type="GO" id="GO:0016787">
    <property type="term" value="F:hydrolase activity"/>
    <property type="evidence" value="ECO:0000315"/>
    <property type="project" value="PseudoCAP"/>
</dbReference>
<dbReference type="GO" id="GO:0000287">
    <property type="term" value="F:magnesium ion binding"/>
    <property type="evidence" value="ECO:0007669"/>
    <property type="project" value="UniProtKB-UniRule"/>
</dbReference>
<dbReference type="GO" id="GO:0030145">
    <property type="term" value="F:manganese ion binding"/>
    <property type="evidence" value="ECO:0007669"/>
    <property type="project" value="UniProtKB-UniRule"/>
</dbReference>
<dbReference type="GO" id="GO:0000210">
    <property type="term" value="F:NAD+ diphosphatase activity"/>
    <property type="evidence" value="ECO:0007669"/>
    <property type="project" value="UniProtKB-UniRule"/>
</dbReference>
<dbReference type="GO" id="GO:0035529">
    <property type="term" value="F:NADH pyrophosphatase activity"/>
    <property type="evidence" value="ECO:0000318"/>
    <property type="project" value="GO_Central"/>
</dbReference>
<dbReference type="GO" id="GO:0110153">
    <property type="term" value="F:RNA NAD-cap (NMN-forming) hydrolase activity"/>
    <property type="evidence" value="ECO:0007669"/>
    <property type="project" value="RHEA"/>
</dbReference>
<dbReference type="GO" id="GO:0008270">
    <property type="term" value="F:zinc ion binding"/>
    <property type="evidence" value="ECO:0007669"/>
    <property type="project" value="UniProtKB-UniRule"/>
</dbReference>
<dbReference type="GO" id="GO:0019677">
    <property type="term" value="P:NAD catabolic process"/>
    <property type="evidence" value="ECO:0000318"/>
    <property type="project" value="GO_Central"/>
</dbReference>
<dbReference type="GO" id="GO:0006734">
    <property type="term" value="P:NADH metabolic process"/>
    <property type="evidence" value="ECO:0000318"/>
    <property type="project" value="GO_Central"/>
</dbReference>
<dbReference type="GO" id="GO:0006742">
    <property type="term" value="P:NADP catabolic process"/>
    <property type="evidence" value="ECO:0000318"/>
    <property type="project" value="GO_Central"/>
</dbReference>
<dbReference type="CDD" id="cd03429">
    <property type="entry name" value="NUDIX_NADH_pyrophosphatase_Nudt13"/>
    <property type="match status" value="1"/>
</dbReference>
<dbReference type="FunFam" id="3.90.79.10:FF:000004">
    <property type="entry name" value="NADH pyrophosphatase"/>
    <property type="match status" value="1"/>
</dbReference>
<dbReference type="FunFam" id="3.90.79.20:FF:000004">
    <property type="entry name" value="NADH pyrophosphatase"/>
    <property type="match status" value="1"/>
</dbReference>
<dbReference type="Gene3D" id="3.90.79.20">
    <property type="match status" value="1"/>
</dbReference>
<dbReference type="Gene3D" id="3.90.79.10">
    <property type="entry name" value="Nucleoside Triphosphate Pyrophosphohydrolase"/>
    <property type="match status" value="1"/>
</dbReference>
<dbReference type="HAMAP" id="MF_00297">
    <property type="entry name" value="Nudix_NudC"/>
    <property type="match status" value="1"/>
</dbReference>
<dbReference type="InterPro" id="IPR050241">
    <property type="entry name" value="NAD-cap_RNA_hydrolase_NudC"/>
</dbReference>
<dbReference type="InterPro" id="IPR015375">
    <property type="entry name" value="NADH_PPase-like_N"/>
</dbReference>
<dbReference type="InterPro" id="IPR049734">
    <property type="entry name" value="NudC-like_C"/>
</dbReference>
<dbReference type="InterPro" id="IPR015797">
    <property type="entry name" value="NUDIX_hydrolase-like_dom_sf"/>
</dbReference>
<dbReference type="InterPro" id="IPR020084">
    <property type="entry name" value="NUDIX_hydrolase_CS"/>
</dbReference>
<dbReference type="InterPro" id="IPR000086">
    <property type="entry name" value="NUDIX_hydrolase_dom"/>
</dbReference>
<dbReference type="InterPro" id="IPR022925">
    <property type="entry name" value="RNA_Hydrolase_NudC"/>
</dbReference>
<dbReference type="InterPro" id="IPR015376">
    <property type="entry name" value="Znr_NADH_PPase"/>
</dbReference>
<dbReference type="NCBIfam" id="NF001299">
    <property type="entry name" value="PRK00241.1"/>
    <property type="match status" value="1"/>
</dbReference>
<dbReference type="PANTHER" id="PTHR42904:SF6">
    <property type="entry name" value="NAD-CAPPED RNA HYDROLASE NUDT12"/>
    <property type="match status" value="1"/>
</dbReference>
<dbReference type="PANTHER" id="PTHR42904">
    <property type="entry name" value="NUDIX HYDROLASE, NUDC SUBFAMILY"/>
    <property type="match status" value="1"/>
</dbReference>
<dbReference type="Pfam" id="PF00293">
    <property type="entry name" value="NUDIX"/>
    <property type="match status" value="1"/>
</dbReference>
<dbReference type="Pfam" id="PF09296">
    <property type="entry name" value="NUDIX-like"/>
    <property type="match status" value="1"/>
</dbReference>
<dbReference type="Pfam" id="PF09297">
    <property type="entry name" value="Zn_ribbon_NUD"/>
    <property type="match status" value="1"/>
</dbReference>
<dbReference type="SUPFAM" id="SSF55811">
    <property type="entry name" value="Nudix"/>
    <property type="match status" value="2"/>
</dbReference>
<dbReference type="PROSITE" id="PS51462">
    <property type="entry name" value="NUDIX"/>
    <property type="match status" value="1"/>
</dbReference>
<dbReference type="PROSITE" id="PS00893">
    <property type="entry name" value="NUDIX_BOX"/>
    <property type="match status" value="1"/>
</dbReference>
<proteinExistence type="inferred from homology"/>
<sequence length="278" mass="31356">MAGEFRWQAGRPATAQVGGWVLAHCQQRFLQDDNGLLFPREWLKRQELPLLAEHGVGHWQGEPVYVLELDEPIELPGMAWAPLRQFMLHGDFDQFCMLGYASQIGIWARHNRFCGNCGTRMQAQDHERVMQCPQCGLHQYPRLSPSMIVLVTRGDEVLLARSPRFVPGVYSTLAGFVEAGESVEQCVVREVREEVGVEVANLEYIGSQNWPFPHSLMLGFHAEYVSGEIVPQEDEIEDAQWFSLDALPPLPAQRSIARHLIDLYLARRSGAAEPVLPG</sequence>
<protein>
    <recommendedName>
        <fullName evidence="1">NAD-capped RNA hydrolase NudC</fullName>
        <shortName evidence="1">DeNADding enzyme NudC</shortName>
        <ecNumber evidence="1">3.6.1.-</ecNumber>
    </recommendedName>
    <alternativeName>
        <fullName evidence="1">NADH pyrophosphatase</fullName>
        <ecNumber evidence="1">3.6.1.22</ecNumber>
    </alternativeName>
</protein>
<keyword id="KW-0378">Hydrolase</keyword>
<keyword id="KW-0460">Magnesium</keyword>
<keyword id="KW-0464">Manganese</keyword>
<keyword id="KW-0479">Metal-binding</keyword>
<keyword id="KW-0520">NAD</keyword>
<keyword id="KW-1185">Reference proteome</keyword>
<keyword id="KW-0862">Zinc</keyword>
<name>NUDC_PSEAE</name>
<evidence type="ECO:0000255" key="1">
    <source>
        <dbReference type="HAMAP-Rule" id="MF_00297"/>
    </source>
</evidence>
<evidence type="ECO:0000305" key="2"/>
<gene>
    <name evidence="1" type="primary">nudC</name>
    <name type="ordered locus">PA1823</name>
</gene>
<organism>
    <name type="scientific">Pseudomonas aeruginosa (strain ATCC 15692 / DSM 22644 / CIP 104116 / JCM 14847 / LMG 12228 / 1C / PRS 101 / PAO1)</name>
    <dbReference type="NCBI Taxonomy" id="208964"/>
    <lineage>
        <taxon>Bacteria</taxon>
        <taxon>Pseudomonadati</taxon>
        <taxon>Pseudomonadota</taxon>
        <taxon>Gammaproteobacteria</taxon>
        <taxon>Pseudomonadales</taxon>
        <taxon>Pseudomonadaceae</taxon>
        <taxon>Pseudomonas</taxon>
    </lineage>
</organism>